<accession>Q6PFM1</accession>
<organism>
    <name type="scientific">Danio rerio</name>
    <name type="common">Zebrafish</name>
    <name type="synonym">Brachydanio rerio</name>
    <dbReference type="NCBI Taxonomy" id="7955"/>
    <lineage>
        <taxon>Eukaryota</taxon>
        <taxon>Metazoa</taxon>
        <taxon>Chordata</taxon>
        <taxon>Craniata</taxon>
        <taxon>Vertebrata</taxon>
        <taxon>Euteleostomi</taxon>
        <taxon>Actinopterygii</taxon>
        <taxon>Neopterygii</taxon>
        <taxon>Teleostei</taxon>
        <taxon>Ostariophysi</taxon>
        <taxon>Cypriniformes</taxon>
        <taxon>Danionidae</taxon>
        <taxon>Danioninae</taxon>
        <taxon>Danio</taxon>
    </lineage>
</organism>
<gene>
    <name type="primary">slc20a1b</name>
    <name type="synonym">slc20a1</name>
</gene>
<keyword id="KW-0472">Membrane</keyword>
<keyword id="KW-0592">Phosphate transport</keyword>
<keyword id="KW-1185">Reference proteome</keyword>
<keyword id="KW-0769">Symport</keyword>
<keyword id="KW-0812">Transmembrane</keyword>
<keyword id="KW-1133">Transmembrane helix</keyword>
<keyword id="KW-0813">Transport</keyword>
<protein>
    <recommendedName>
        <fullName>Sodium-dependent phosphate transporter 1-B</fullName>
    </recommendedName>
    <alternativeName>
        <fullName>Solute carrier family 20 member 1-B</fullName>
    </alternativeName>
</protein>
<comment type="function">
    <text evidence="1">Sodium-phosphate symporter which plays a fundamental housekeeping role in phosphate transport.</text>
</comment>
<comment type="subcellular location">
    <subcellularLocation>
        <location evidence="4">Membrane</location>
        <topology evidence="4">Multi-pass membrane protein</topology>
    </subcellularLocation>
</comment>
<comment type="similarity">
    <text evidence="4">Belongs to the inorganic phosphate transporter (PiT) (TC 2.A.20) family.</text>
</comment>
<proteinExistence type="evidence at transcript level"/>
<feature type="chain" id="PRO_0000080775" description="Sodium-dependent phosphate transporter 1-B">
    <location>
        <begin position="1"/>
        <end position="665"/>
    </location>
</feature>
<feature type="transmembrane region" description="Helical" evidence="2">
    <location>
        <begin position="26"/>
        <end position="46"/>
    </location>
</feature>
<feature type="transmembrane region" description="Helical" evidence="2">
    <location>
        <begin position="67"/>
        <end position="87"/>
    </location>
</feature>
<feature type="transmembrane region" description="Helical" evidence="2">
    <location>
        <begin position="107"/>
        <end position="127"/>
    </location>
</feature>
<feature type="transmembrane region" description="Helical" evidence="2">
    <location>
        <begin position="163"/>
        <end position="183"/>
    </location>
</feature>
<feature type="transmembrane region" description="Helical" evidence="2">
    <location>
        <begin position="202"/>
        <end position="222"/>
    </location>
</feature>
<feature type="transmembrane region" description="Helical" evidence="2">
    <location>
        <begin position="235"/>
        <end position="255"/>
    </location>
</feature>
<feature type="transmembrane region" description="Helical" evidence="2">
    <location>
        <begin position="499"/>
        <end position="519"/>
    </location>
</feature>
<feature type="transmembrane region" description="Helical" evidence="2">
    <location>
        <begin position="548"/>
        <end position="568"/>
    </location>
</feature>
<feature type="transmembrane region" description="Helical" evidence="2">
    <location>
        <begin position="588"/>
        <end position="608"/>
    </location>
</feature>
<feature type="transmembrane region" description="Helical" evidence="2">
    <location>
        <begin position="638"/>
        <end position="658"/>
    </location>
</feature>
<feature type="region of interest" description="Disordered" evidence="3">
    <location>
        <begin position="294"/>
        <end position="345"/>
    </location>
</feature>
<feature type="region of interest" description="Disordered" evidence="3">
    <location>
        <begin position="423"/>
        <end position="442"/>
    </location>
</feature>
<feature type="compositionally biased region" description="Low complexity" evidence="3">
    <location>
        <begin position="296"/>
        <end position="306"/>
    </location>
</feature>
<feature type="compositionally biased region" description="Basic and acidic residues" evidence="3">
    <location>
        <begin position="329"/>
        <end position="338"/>
    </location>
</feature>
<evidence type="ECO:0000250" key="1"/>
<evidence type="ECO:0000255" key="2"/>
<evidence type="ECO:0000256" key="3">
    <source>
        <dbReference type="SAM" id="MobiDB-lite"/>
    </source>
</evidence>
<evidence type="ECO:0000305" key="4"/>
<reference key="1">
    <citation type="submission" date="2003-09" db="EMBL/GenBank/DDBJ databases">
        <authorList>
            <consortium name="NIH - Zebrafish Gene Collection (ZGC) project"/>
        </authorList>
    </citation>
    <scope>NUCLEOTIDE SEQUENCE [LARGE SCALE MRNA]</scope>
    <source>
        <strain>AB</strain>
    </source>
</reference>
<name>S20AB_DANRE</name>
<dbReference type="EMBL" id="BC057497">
    <property type="protein sequence ID" value="AAH57497.1"/>
    <property type="molecule type" value="mRNA"/>
</dbReference>
<dbReference type="RefSeq" id="NP_997753.1">
    <property type="nucleotide sequence ID" value="NM_212588.1"/>
</dbReference>
<dbReference type="SMR" id="Q6PFM1"/>
<dbReference type="FunCoup" id="Q6PFM1">
    <property type="interactions" value="1258"/>
</dbReference>
<dbReference type="STRING" id="7955.ENSDARP00000039968"/>
<dbReference type="PaxDb" id="7955-ENSDARP00000039968"/>
<dbReference type="GeneID" id="321541"/>
<dbReference type="KEGG" id="dre:321541"/>
<dbReference type="AGR" id="ZFIN:ZDB-GENE-030131-260"/>
<dbReference type="CTD" id="321541"/>
<dbReference type="ZFIN" id="ZDB-GENE-030131-260">
    <property type="gene designation" value="slc20a1b"/>
</dbReference>
<dbReference type="eggNOG" id="KOG2493">
    <property type="taxonomic scope" value="Eukaryota"/>
</dbReference>
<dbReference type="InParanoid" id="Q6PFM1"/>
<dbReference type="OrthoDB" id="260807at2759"/>
<dbReference type="PhylomeDB" id="Q6PFM1"/>
<dbReference type="Reactome" id="R-DRE-427652">
    <property type="pathway name" value="Sodium-coupled phosphate cotransporters"/>
</dbReference>
<dbReference type="ChiTaRS" id="slc20a1b">
    <property type="organism name" value="zebrafish"/>
</dbReference>
<dbReference type="PRO" id="PR:Q6PFM1"/>
<dbReference type="Proteomes" id="UP000000437">
    <property type="component" value="Chromosome 10"/>
</dbReference>
<dbReference type="GO" id="GO:0016020">
    <property type="term" value="C:membrane"/>
    <property type="evidence" value="ECO:0007669"/>
    <property type="project" value="UniProtKB-SubCell"/>
</dbReference>
<dbReference type="GO" id="GO:0005315">
    <property type="term" value="F:phosphate transmembrane transporter activity"/>
    <property type="evidence" value="ECO:0000318"/>
    <property type="project" value="GO_Central"/>
</dbReference>
<dbReference type="GO" id="GO:0015293">
    <property type="term" value="F:symporter activity"/>
    <property type="evidence" value="ECO:0007669"/>
    <property type="project" value="UniProtKB-KW"/>
</dbReference>
<dbReference type="GO" id="GO:0035435">
    <property type="term" value="P:phosphate ion transmembrane transport"/>
    <property type="evidence" value="ECO:0000318"/>
    <property type="project" value="GO_Central"/>
</dbReference>
<dbReference type="InterPro" id="IPR001204">
    <property type="entry name" value="Phos_transporter"/>
</dbReference>
<dbReference type="PANTHER" id="PTHR11101">
    <property type="entry name" value="PHOSPHATE TRANSPORTER"/>
    <property type="match status" value="1"/>
</dbReference>
<dbReference type="PANTHER" id="PTHR11101:SF46">
    <property type="entry name" value="SODIUM-DEPENDENT PHOSPHATE TRANSPORTER 1"/>
    <property type="match status" value="1"/>
</dbReference>
<dbReference type="Pfam" id="PF01384">
    <property type="entry name" value="PHO4"/>
    <property type="match status" value="1"/>
</dbReference>
<sequence length="665" mass="72063">MVSTTLATITIMSTLVGYTTGPLTDYMWLLIVGFIIAFVLAFSVGANDVANSFGTAVGSGVVTLRQACILASIFETLGSVLLGAKVSETIRKGIIDVTMYKDIEHVLMAGSVSAMFGSAVWQLAASFLKLPISGTHCIVGATIGFSLVAKGQQGVKWLELLRIVASWFLSPLLSGVMSAVLFYFVRMFILQKKDPVPNGLRALPFFYAVTMGINLFSIMFTGAPMLGFDKLPWWGVLLISIGFGIITALIVWFAVCPRLKKKIECEVKSSSPSESPLMEKRELHEAHSPILKPVPEESSVLSSSTPTTPPLPPPEERRVTFDIGDSDDADQKDCKESDLGGAPKTAHVHFTNGPAHIPSNGYSQYHTVHKDSGLYKDLLHKLHLAKVGDCMGEGGDRPIRRNNSYTSYTMAIIGMHGDFKPKESEFRASEDGDKEKAGAQERKRIRMDSYTSYCNAVAENGTPEDLGEGEVTLEMVDEDAGSSRSSLEEDRTDADKPEVSMLFQFLQILTACFGSFAHGGNDVSNAIGPLVALWLVYESGSVISSAPTPIWLLLYGGVGICVGLWVWGRRVIQTMGRDLTPITPSSGFSIELASAVTVVVASNIGLPVSTTHCKVGSVVAVGWLRSRKAVDWRLFRNIFMAWFVTVPISGLISAAIMALFNYVIL</sequence>